<proteinExistence type="evidence at protein level"/>
<protein>
    <recommendedName>
        <fullName>Catenin alpha</fullName>
    </recommendedName>
</protein>
<name>CTNA_DROME</name>
<comment type="function">
    <text>Associates with the cytoplasmic domain of a variety of cadherins. The association of catenins to cadherins produces a complex which is linked to the actin filament network, and which seems to be of primary importance for cadherins cell-adhesion properties.</text>
</comment>
<comment type="subunit">
    <text evidence="4">Interacts with arm/armadillo protein.</text>
</comment>
<comment type="interaction">
    <interactant intactId="EBI-126806">
        <id>P35220</id>
    </interactant>
    <interactant intactId="EBI-126806">
        <id>P35220</id>
        <label>alpha-Cat</label>
    </interactant>
    <organismsDiffer>false</organismsDiffer>
    <experiments>2</experiments>
</comment>
<comment type="interaction">
    <interactant intactId="EBI-126806">
        <id>P35220</id>
    </interactant>
    <interactant intactId="EBI-216128">
        <id>P18824</id>
        <label>arm</label>
    </interactant>
    <organismsDiffer>false</organismsDiffer>
    <experiments>4</experiments>
</comment>
<comment type="subcellular location">
    <subcellularLocation>
        <location evidence="1">Cytoplasm</location>
        <location evidence="1">Cytoskeleton</location>
    </subcellularLocation>
    <subcellularLocation>
        <location evidence="4">Cell junction</location>
        <location evidence="4">Adherens junction</location>
    </subcellularLocation>
    <subcellularLocation>
        <location evidence="4">Cell membrane</location>
        <topology evidence="1">Peripheral membrane protein</topology>
        <orientation evidence="1">Cytoplasmic side</orientation>
    </subcellularLocation>
    <subcellularLocation>
        <location>Cell junction</location>
    </subcellularLocation>
    <text>Found only at cell-cell boundaries.</text>
</comment>
<comment type="developmental stage">
    <text>Present at all stages, but reached the highest levels during early to mid-embryogenesis.</text>
</comment>
<comment type="PTM">
    <text evidence="4">Rapidly phosphorylated by CK2 and more slowly by CK1.</text>
</comment>
<comment type="disruption phenotype">
    <text evidence="4 5">Mutants die at a late embryonic stage with severe defects in head morphogenesis (PubMed:25653389). In embryos, RNAi-mediated knockdown in the hemocytes has no effect on their developmental migration during stages 10-14 of embryogenesis (PubMed:25739458).</text>
</comment>
<comment type="similarity">
    <text evidence="6">Belongs to the vinculin/alpha-catenin family.</text>
</comment>
<gene>
    <name evidence="7" type="primary">alpha-Cat</name>
    <name evidence="7" type="ORF">CG17947</name>
</gene>
<reference key="1">
    <citation type="journal article" date="1993" name="J. Cell Biol.">
        <title>Identification of a Drosophila homologue of alpha-catenin and its association with the armadillo protein.</title>
        <authorList>
            <person name="Oda H."/>
            <person name="Uemura T."/>
            <person name="Shiomi K."/>
            <person name="Nagafuchi A."/>
            <person name="Tsukita S."/>
            <person name="Takeichi M."/>
        </authorList>
    </citation>
    <scope>NUCLEOTIDE SEQUENCE [MRNA]</scope>
</reference>
<reference key="2">
    <citation type="submission" date="2001-06" db="EMBL/GenBank/DDBJ databases">
        <authorList>
            <person name="Takeichi M."/>
        </authorList>
    </citation>
    <scope>SEQUENCE REVISION TO N-TERMINUS</scope>
</reference>
<reference key="3">
    <citation type="journal article" date="2000" name="Science">
        <title>The genome sequence of Drosophila melanogaster.</title>
        <authorList>
            <person name="Adams M.D."/>
            <person name="Celniker S.E."/>
            <person name="Holt R.A."/>
            <person name="Evans C.A."/>
            <person name="Gocayne J.D."/>
            <person name="Amanatides P.G."/>
            <person name="Scherer S.E."/>
            <person name="Li P.W."/>
            <person name="Hoskins R.A."/>
            <person name="Galle R.F."/>
            <person name="George R.A."/>
            <person name="Lewis S.E."/>
            <person name="Richards S."/>
            <person name="Ashburner M."/>
            <person name="Henderson S.N."/>
            <person name="Sutton G.G."/>
            <person name="Wortman J.R."/>
            <person name="Yandell M.D."/>
            <person name="Zhang Q."/>
            <person name="Chen L.X."/>
            <person name="Brandon R.C."/>
            <person name="Rogers Y.-H.C."/>
            <person name="Blazej R.G."/>
            <person name="Champe M."/>
            <person name="Pfeiffer B.D."/>
            <person name="Wan K.H."/>
            <person name="Doyle C."/>
            <person name="Baxter E.G."/>
            <person name="Helt G."/>
            <person name="Nelson C.R."/>
            <person name="Miklos G.L.G."/>
            <person name="Abril J.F."/>
            <person name="Agbayani A."/>
            <person name="An H.-J."/>
            <person name="Andrews-Pfannkoch C."/>
            <person name="Baldwin D."/>
            <person name="Ballew R.M."/>
            <person name="Basu A."/>
            <person name="Baxendale J."/>
            <person name="Bayraktaroglu L."/>
            <person name="Beasley E.M."/>
            <person name="Beeson K.Y."/>
            <person name="Benos P.V."/>
            <person name="Berman B.P."/>
            <person name="Bhandari D."/>
            <person name="Bolshakov S."/>
            <person name="Borkova D."/>
            <person name="Botchan M.R."/>
            <person name="Bouck J."/>
            <person name="Brokstein P."/>
            <person name="Brottier P."/>
            <person name="Burtis K.C."/>
            <person name="Busam D.A."/>
            <person name="Butler H."/>
            <person name="Cadieu E."/>
            <person name="Center A."/>
            <person name="Chandra I."/>
            <person name="Cherry J.M."/>
            <person name="Cawley S."/>
            <person name="Dahlke C."/>
            <person name="Davenport L.B."/>
            <person name="Davies P."/>
            <person name="de Pablos B."/>
            <person name="Delcher A."/>
            <person name="Deng Z."/>
            <person name="Mays A.D."/>
            <person name="Dew I."/>
            <person name="Dietz S.M."/>
            <person name="Dodson K."/>
            <person name="Doup L.E."/>
            <person name="Downes M."/>
            <person name="Dugan-Rocha S."/>
            <person name="Dunkov B.C."/>
            <person name="Dunn P."/>
            <person name="Durbin K.J."/>
            <person name="Evangelista C.C."/>
            <person name="Ferraz C."/>
            <person name="Ferriera S."/>
            <person name="Fleischmann W."/>
            <person name="Fosler C."/>
            <person name="Gabrielian A.E."/>
            <person name="Garg N.S."/>
            <person name="Gelbart W.M."/>
            <person name="Glasser K."/>
            <person name="Glodek A."/>
            <person name="Gong F."/>
            <person name="Gorrell J.H."/>
            <person name="Gu Z."/>
            <person name="Guan P."/>
            <person name="Harris M."/>
            <person name="Harris N.L."/>
            <person name="Harvey D.A."/>
            <person name="Heiman T.J."/>
            <person name="Hernandez J.R."/>
            <person name="Houck J."/>
            <person name="Hostin D."/>
            <person name="Houston K.A."/>
            <person name="Howland T.J."/>
            <person name="Wei M.-H."/>
            <person name="Ibegwam C."/>
            <person name="Jalali M."/>
            <person name="Kalush F."/>
            <person name="Karpen G.H."/>
            <person name="Ke Z."/>
            <person name="Kennison J.A."/>
            <person name="Ketchum K.A."/>
            <person name="Kimmel B.E."/>
            <person name="Kodira C.D."/>
            <person name="Kraft C.L."/>
            <person name="Kravitz S."/>
            <person name="Kulp D."/>
            <person name="Lai Z."/>
            <person name="Lasko P."/>
            <person name="Lei Y."/>
            <person name="Levitsky A.A."/>
            <person name="Li J.H."/>
            <person name="Li Z."/>
            <person name="Liang Y."/>
            <person name="Lin X."/>
            <person name="Liu X."/>
            <person name="Mattei B."/>
            <person name="McIntosh T.C."/>
            <person name="McLeod M.P."/>
            <person name="McPherson D."/>
            <person name="Merkulov G."/>
            <person name="Milshina N.V."/>
            <person name="Mobarry C."/>
            <person name="Morris J."/>
            <person name="Moshrefi A."/>
            <person name="Mount S.M."/>
            <person name="Moy M."/>
            <person name="Murphy B."/>
            <person name="Murphy L."/>
            <person name="Muzny D.M."/>
            <person name="Nelson D.L."/>
            <person name="Nelson D.R."/>
            <person name="Nelson K.A."/>
            <person name="Nixon K."/>
            <person name="Nusskern D.R."/>
            <person name="Pacleb J.M."/>
            <person name="Palazzolo M."/>
            <person name="Pittman G.S."/>
            <person name="Pan S."/>
            <person name="Pollard J."/>
            <person name="Puri V."/>
            <person name="Reese M.G."/>
            <person name="Reinert K."/>
            <person name="Remington K."/>
            <person name="Saunders R.D.C."/>
            <person name="Scheeler F."/>
            <person name="Shen H."/>
            <person name="Shue B.C."/>
            <person name="Siden-Kiamos I."/>
            <person name="Simpson M."/>
            <person name="Skupski M.P."/>
            <person name="Smith T.J."/>
            <person name="Spier E."/>
            <person name="Spradling A.C."/>
            <person name="Stapleton M."/>
            <person name="Strong R."/>
            <person name="Sun E."/>
            <person name="Svirskas R."/>
            <person name="Tector C."/>
            <person name="Turner R."/>
            <person name="Venter E."/>
            <person name="Wang A.H."/>
            <person name="Wang X."/>
            <person name="Wang Z.-Y."/>
            <person name="Wassarman D.A."/>
            <person name="Weinstock G.M."/>
            <person name="Weissenbach J."/>
            <person name="Williams S.M."/>
            <person name="Woodage T."/>
            <person name="Worley K.C."/>
            <person name="Wu D."/>
            <person name="Yang S."/>
            <person name="Yao Q.A."/>
            <person name="Ye J."/>
            <person name="Yeh R.-F."/>
            <person name="Zaveri J.S."/>
            <person name="Zhan M."/>
            <person name="Zhang G."/>
            <person name="Zhao Q."/>
            <person name="Zheng L."/>
            <person name="Zheng X.H."/>
            <person name="Zhong F.N."/>
            <person name="Zhong W."/>
            <person name="Zhou X."/>
            <person name="Zhu S.C."/>
            <person name="Zhu X."/>
            <person name="Smith H.O."/>
            <person name="Gibbs R.A."/>
            <person name="Myers E.W."/>
            <person name="Rubin G.M."/>
            <person name="Venter J.C."/>
        </authorList>
    </citation>
    <scope>NUCLEOTIDE SEQUENCE [LARGE SCALE GENOMIC DNA]</scope>
    <source>
        <strain>Berkeley</strain>
    </source>
</reference>
<reference key="4">
    <citation type="journal article" date="2002" name="Genome Biol.">
        <title>Annotation of the Drosophila melanogaster euchromatic genome: a systematic review.</title>
        <authorList>
            <person name="Misra S."/>
            <person name="Crosby M.A."/>
            <person name="Mungall C.J."/>
            <person name="Matthews B.B."/>
            <person name="Campbell K.S."/>
            <person name="Hradecky P."/>
            <person name="Huang Y."/>
            <person name="Kaminker J.S."/>
            <person name="Millburn G.H."/>
            <person name="Prochnik S.E."/>
            <person name="Smith C.D."/>
            <person name="Tupy J.L."/>
            <person name="Whitfield E.J."/>
            <person name="Bayraktaroglu L."/>
            <person name="Berman B.P."/>
            <person name="Bettencourt B.R."/>
            <person name="Celniker S.E."/>
            <person name="de Grey A.D.N.J."/>
            <person name="Drysdale R.A."/>
            <person name="Harris N.L."/>
            <person name="Richter J."/>
            <person name="Russo S."/>
            <person name="Schroeder A.J."/>
            <person name="Shu S.Q."/>
            <person name="Stapleton M."/>
            <person name="Yamada C."/>
            <person name="Ashburner M."/>
            <person name="Gelbart W.M."/>
            <person name="Rubin G.M."/>
            <person name="Lewis S.E."/>
        </authorList>
    </citation>
    <scope>GENOME REANNOTATION</scope>
    <source>
        <strain>Berkeley</strain>
    </source>
</reference>
<reference key="5">
    <citation type="journal article" date="2002" name="Genome Biol.">
        <title>A Drosophila full-length cDNA resource.</title>
        <authorList>
            <person name="Stapleton M."/>
            <person name="Carlson J.W."/>
            <person name="Brokstein P."/>
            <person name="Yu C."/>
            <person name="Champe M."/>
            <person name="George R.A."/>
            <person name="Guarin H."/>
            <person name="Kronmiller B."/>
            <person name="Pacleb J.M."/>
            <person name="Park S."/>
            <person name="Wan K.H."/>
            <person name="Rubin G.M."/>
            <person name="Celniker S.E."/>
        </authorList>
    </citation>
    <scope>NUCLEOTIDE SEQUENCE [LARGE SCALE MRNA]</scope>
    <source>
        <strain>Berkeley</strain>
        <tissue>Embryo</tissue>
    </source>
</reference>
<reference key="6">
    <citation type="journal article" date="2008" name="J. Proteome Res.">
        <title>Phosphoproteome analysis of Drosophila melanogaster embryos.</title>
        <authorList>
            <person name="Zhai B."/>
            <person name="Villen J."/>
            <person name="Beausoleil S.A."/>
            <person name="Mintseris J."/>
            <person name="Gygi S.P."/>
        </authorList>
    </citation>
    <scope>PHOSPHORYLATION [LARGE SCALE ANALYSIS] AT THR-643; THR-645; SER-659 AND SER-662</scope>
    <scope>IDENTIFICATION BY MASS SPECTROMETRY</scope>
    <source>
        <tissue>Embryo</tissue>
    </source>
</reference>
<reference key="7">
    <citation type="journal article" date="2015" name="J. Cell Sci.">
        <title>alpha-Catenin phosphorylation promotes intercellular adhesion through a dual-kinase mechanism.</title>
        <authorList>
            <person name="Escobar D.J."/>
            <person name="Desai R."/>
            <person name="Ishiyama N."/>
            <person name="Folmsbee S.S."/>
            <person name="Novak M.N."/>
            <person name="Flozak A.S."/>
            <person name="Daugherty R.L."/>
            <person name="Mo R."/>
            <person name="Nanavati D."/>
            <person name="Sarpal R."/>
            <person name="Leckband D."/>
            <person name="Ikura M."/>
            <person name="Tepass U."/>
            <person name="Gottardi C.J."/>
        </authorList>
    </citation>
    <scope>PHOSPHORYLATION</scope>
    <scope>SUBCELLULAR LOCATION</scope>
    <scope>INTERACTION WITH ARM</scope>
    <scope>MUTAGENESIS OF 632-VAL--PRO-674; 637-SER--THR-669 AND THR-645</scope>
</reference>
<reference key="8">
    <citation type="journal article" date="2015" name="Mol. Biol. Cell">
        <title>Wash functions downstream of Rho1 GTPase in a subset of Drosophila immune cell developmental migrations.</title>
        <authorList>
            <person name="Verboon J.M."/>
            <person name="Rahe T.K."/>
            <person name="Rodriguez-Mesa E."/>
            <person name="Parkhurst S.M."/>
        </authorList>
    </citation>
    <scope>DISRUPTION PHENOTYPE</scope>
</reference>
<keyword id="KW-0130">Cell adhesion</keyword>
<keyword id="KW-0965">Cell junction</keyword>
<keyword id="KW-1003">Cell membrane</keyword>
<keyword id="KW-0963">Cytoplasm</keyword>
<keyword id="KW-0206">Cytoskeleton</keyword>
<keyword id="KW-0472">Membrane</keyword>
<keyword id="KW-0597">Phosphoprotein</keyword>
<keyword id="KW-1185">Reference proteome</keyword>
<accession>P35220</accession>
<accession>Q960Y2</accession>
<accession>Q9W5V9</accession>
<sequence>MLKPDKMGTLTDFGQIALKWDPKNLEIRTMSVEKTLEPLVLQVTTLVNTKGPSKKKKGKSKRASALVAAVEKATENFIQKGEQIAYENPDITQEMLTAVDEVKKTGDAMSIAAREFSEDPCSSLKRGNMVRAARNLLSAVTRLLILADMVDVHLLLKSLHIVEDDLNKLKNASSQDELMDNMRQFGRNAGELIKQAAKRQQELKDPQLRDDLAAARAMLKKHSTMLLTASKVYVRHPELDLAKVNRDFILKQVCDAVNTISDVAQGKSSQPTDIYSGAGELAAALDDFDEGIVMDPMTYSEKRSRQLLEERLESIISAAALMADADCTRDERRERIVAECNAVRQALQDLLSEYMSNMSQKDNSPGLSRAIDQMCRKTRDLRRQLRKAVVDHVSDSFLETTTPLLDLIEAAKSGNEKKVREKSEIFTKHAEKLVEVANLVCSMSNNEDGVKMVRYAAAQIESLCPQVINAASILTVRPNSKVAQENMTTYRQAWEVQVRILTEAVDDITTIDDFLAVSENHILEDVNKCVMALQVGDARDLRATAGAIQGRSSRVCNVVEAEMDNYEPCIYTKRVLEAVKVLRDQVMMKFDQRVGAAVGALSNNSNKDVDENDFIDASRLVYDGVREIRRAVLMNRSSEDLDTDTEFEPVEDLTLETRSRSSAHTGDQTVDEYPDISGICTAREAMRKMTEEDKQKIAQQVELFRREKLTFDSEVAKWDDTGNDIIFLAKHMCMIMMEMTDFTRGRGPLKTTMDVINAAKKISEAGTKLDKLTREIAEQCPESSTKKDLLAYLQRIALYCHQIQITSKVKADVQNISGELIVSGLDSATSLIQAAKNLMNAVVLTVKYSYVASTKYTRQGTVSSPIVVWKMKAPEKKPLVRPEKPEEVRAKVRKGSQKKVQNPIHALSEFQSPADAV</sequence>
<evidence type="ECO:0000250" key="1"/>
<evidence type="ECO:0000256" key="2">
    <source>
        <dbReference type="SAM" id="MobiDB-lite"/>
    </source>
</evidence>
<evidence type="ECO:0000269" key="3">
    <source>
    </source>
</evidence>
<evidence type="ECO:0000269" key="4">
    <source>
    </source>
</evidence>
<evidence type="ECO:0000269" key="5">
    <source>
    </source>
</evidence>
<evidence type="ECO:0000305" key="6"/>
<evidence type="ECO:0000312" key="7">
    <source>
        <dbReference type="FlyBase" id="FBgn0010215"/>
    </source>
</evidence>
<dbReference type="EMBL" id="D13964">
    <property type="protein sequence ID" value="BAA03067.2"/>
    <property type="molecule type" value="mRNA"/>
</dbReference>
<dbReference type="EMBL" id="AE014296">
    <property type="protein sequence ID" value="AAF45466.1"/>
    <property type="molecule type" value="Genomic_DNA"/>
</dbReference>
<dbReference type="EMBL" id="AY051780">
    <property type="protein sequence ID" value="AAK93204.1"/>
    <property type="molecule type" value="mRNA"/>
</dbReference>
<dbReference type="PIR" id="A40694">
    <property type="entry name" value="A40694"/>
</dbReference>
<dbReference type="RefSeq" id="NP_524219.1">
    <property type="nucleotide sequence ID" value="NM_079495.3"/>
</dbReference>
<dbReference type="SMR" id="P35220"/>
<dbReference type="BioGRID" id="65744">
    <property type="interactions" value="23"/>
</dbReference>
<dbReference type="DIP" id="DIP-21662N"/>
<dbReference type="FunCoup" id="P35220">
    <property type="interactions" value="271"/>
</dbReference>
<dbReference type="IntAct" id="P35220">
    <property type="interactions" value="9"/>
</dbReference>
<dbReference type="STRING" id="7227.FBpp0070037"/>
<dbReference type="iPTMnet" id="P35220"/>
<dbReference type="PaxDb" id="7227-FBpp0070037"/>
<dbReference type="EnsemblMetazoa" id="FBtr0070038">
    <property type="protein sequence ID" value="FBpp0070037"/>
    <property type="gene ID" value="FBgn0010215"/>
</dbReference>
<dbReference type="GeneID" id="40517"/>
<dbReference type="KEGG" id="dme:Dmel_CG17947"/>
<dbReference type="AGR" id="FB:FBgn0010215"/>
<dbReference type="CTD" id="40517"/>
<dbReference type="FlyBase" id="FBgn0010215">
    <property type="gene designation" value="alpha-Cat"/>
</dbReference>
<dbReference type="VEuPathDB" id="VectorBase:FBgn0010215"/>
<dbReference type="eggNOG" id="KOG3681">
    <property type="taxonomic scope" value="Eukaryota"/>
</dbReference>
<dbReference type="GeneTree" id="ENSGT01030000234543"/>
<dbReference type="HOGENOM" id="CLU_015314_2_0_1"/>
<dbReference type="InParanoid" id="P35220"/>
<dbReference type="OMA" id="MNNMRQF"/>
<dbReference type="OrthoDB" id="6376697at2759"/>
<dbReference type="PhylomeDB" id="P35220"/>
<dbReference type="Reactome" id="R-DME-418990">
    <property type="pathway name" value="Adherens junctions interactions"/>
</dbReference>
<dbReference type="Reactome" id="R-DME-5218920">
    <property type="pathway name" value="VEGFR2 mediated vascular permeability"/>
</dbReference>
<dbReference type="Reactome" id="R-DME-525793">
    <property type="pathway name" value="Myogenesis"/>
</dbReference>
<dbReference type="SignaLink" id="P35220"/>
<dbReference type="BioGRID-ORCS" id="40517">
    <property type="hits" value="0 hits in 3 CRISPR screens"/>
</dbReference>
<dbReference type="ChiTaRS" id="alpha-Cat">
    <property type="organism name" value="fly"/>
</dbReference>
<dbReference type="GenomeRNAi" id="40517"/>
<dbReference type="PRO" id="PR:P35220"/>
<dbReference type="Proteomes" id="UP000000803">
    <property type="component" value="Chromosome 3L"/>
</dbReference>
<dbReference type="Bgee" id="FBgn0010215">
    <property type="expression patterns" value="Expressed in eye disc (Drosophila) and 286 other cell types or tissues"/>
</dbReference>
<dbReference type="ExpressionAtlas" id="P35220">
    <property type="expression patterns" value="baseline and differential"/>
</dbReference>
<dbReference type="GO" id="GO:0015629">
    <property type="term" value="C:actin cytoskeleton"/>
    <property type="evidence" value="ECO:0007669"/>
    <property type="project" value="InterPro"/>
</dbReference>
<dbReference type="GO" id="GO:0005912">
    <property type="term" value="C:adherens junction"/>
    <property type="evidence" value="ECO:0000314"/>
    <property type="project" value="FlyBase"/>
</dbReference>
<dbReference type="GO" id="GO:0016342">
    <property type="term" value="C:catenin complex"/>
    <property type="evidence" value="ECO:0000314"/>
    <property type="project" value="FlyBase"/>
</dbReference>
<dbReference type="GO" id="GO:0005737">
    <property type="term" value="C:cytoplasm"/>
    <property type="evidence" value="ECO:0007669"/>
    <property type="project" value="UniProtKB-KW"/>
</dbReference>
<dbReference type="GO" id="GO:0005886">
    <property type="term" value="C:plasma membrane"/>
    <property type="evidence" value="ECO:0000314"/>
    <property type="project" value="FlyBase"/>
</dbReference>
<dbReference type="GO" id="GO:0051015">
    <property type="term" value="F:actin filament binding"/>
    <property type="evidence" value="ECO:0000318"/>
    <property type="project" value="GO_Central"/>
</dbReference>
<dbReference type="GO" id="GO:0008013">
    <property type="term" value="F:beta-catenin binding"/>
    <property type="evidence" value="ECO:0000318"/>
    <property type="project" value="GO_Central"/>
</dbReference>
<dbReference type="GO" id="GO:0045296">
    <property type="term" value="F:cadherin binding"/>
    <property type="evidence" value="ECO:0007669"/>
    <property type="project" value="InterPro"/>
</dbReference>
<dbReference type="GO" id="GO:0042802">
    <property type="term" value="F:identical protein binding"/>
    <property type="evidence" value="ECO:0000353"/>
    <property type="project" value="IntAct"/>
</dbReference>
<dbReference type="GO" id="GO:0005198">
    <property type="term" value="F:structural molecule activity"/>
    <property type="evidence" value="ECO:0007669"/>
    <property type="project" value="InterPro"/>
</dbReference>
<dbReference type="GO" id="GO:0034333">
    <property type="term" value="P:adherens junction assembly"/>
    <property type="evidence" value="ECO:0000315"/>
    <property type="project" value="FlyBase"/>
</dbReference>
<dbReference type="GO" id="GO:0034332">
    <property type="term" value="P:adherens junction organization"/>
    <property type="evidence" value="ECO:0000315"/>
    <property type="project" value="FlyBase"/>
</dbReference>
<dbReference type="GO" id="GO:0003383">
    <property type="term" value="P:apical constriction"/>
    <property type="evidence" value="ECO:0000315"/>
    <property type="project" value="FlyBase"/>
</dbReference>
<dbReference type="GO" id="GO:0016477">
    <property type="term" value="P:cell migration"/>
    <property type="evidence" value="ECO:0000318"/>
    <property type="project" value="GO_Central"/>
</dbReference>
<dbReference type="GO" id="GO:0098609">
    <property type="term" value="P:cell-cell adhesion"/>
    <property type="evidence" value="ECO:0000318"/>
    <property type="project" value="GO_Central"/>
</dbReference>
<dbReference type="GO" id="GO:0046664">
    <property type="term" value="P:dorsal closure, amnioserosa morphology change"/>
    <property type="evidence" value="ECO:0000315"/>
    <property type="project" value="FlyBase"/>
</dbReference>
<dbReference type="GO" id="GO:0060323">
    <property type="term" value="P:head morphogenesis"/>
    <property type="evidence" value="ECO:0000315"/>
    <property type="project" value="FlyBase"/>
</dbReference>
<dbReference type="FunFam" id="1.20.120.230:FF:000020">
    <property type="entry name" value="Catenin alpha"/>
    <property type="match status" value="1"/>
</dbReference>
<dbReference type="FunFam" id="1.20.120.230:FF:000006">
    <property type="entry name" value="Catenin alpha 1"/>
    <property type="match status" value="1"/>
</dbReference>
<dbReference type="FunFam" id="1.20.120.230:FF:000007">
    <property type="entry name" value="Catenin alpha 1"/>
    <property type="match status" value="1"/>
</dbReference>
<dbReference type="Gene3D" id="6.10.250.2510">
    <property type="match status" value="1"/>
</dbReference>
<dbReference type="Gene3D" id="1.20.120.230">
    <property type="entry name" value="Alpha-catenin/vinculin-like"/>
    <property type="match status" value="5"/>
</dbReference>
<dbReference type="InterPro" id="IPR036723">
    <property type="entry name" value="Alpha-catenin/vinculin-like_sf"/>
</dbReference>
<dbReference type="InterPro" id="IPR001033">
    <property type="entry name" value="Alpha_catenin"/>
</dbReference>
<dbReference type="InterPro" id="IPR006077">
    <property type="entry name" value="Vinculin/catenin"/>
</dbReference>
<dbReference type="InterPro" id="IPR000633">
    <property type="entry name" value="Vinculin_CS"/>
</dbReference>
<dbReference type="PANTHER" id="PTHR18914">
    <property type="entry name" value="ALPHA CATENIN"/>
    <property type="match status" value="1"/>
</dbReference>
<dbReference type="PANTHER" id="PTHR18914:SF9">
    <property type="entry name" value="CATENIN ALPHA"/>
    <property type="match status" value="1"/>
</dbReference>
<dbReference type="Pfam" id="PF01044">
    <property type="entry name" value="Vinculin"/>
    <property type="match status" value="1"/>
</dbReference>
<dbReference type="PRINTS" id="PR00805">
    <property type="entry name" value="ALPHACATENIN"/>
</dbReference>
<dbReference type="SUPFAM" id="SSF47220">
    <property type="entry name" value="alpha-catenin/vinculin-like"/>
    <property type="match status" value="4"/>
</dbReference>
<dbReference type="PROSITE" id="PS00663">
    <property type="entry name" value="VINCULIN_1"/>
    <property type="match status" value="1"/>
</dbReference>
<feature type="chain" id="PRO_0000064260" description="Catenin alpha">
    <location>
        <begin position="1"/>
        <end position="917"/>
    </location>
</feature>
<feature type="region of interest" description="Disordered" evidence="2">
    <location>
        <begin position="878"/>
        <end position="905"/>
    </location>
</feature>
<feature type="compositionally biased region" description="Basic and acidic residues" evidence="2">
    <location>
        <begin position="878"/>
        <end position="890"/>
    </location>
</feature>
<feature type="modified residue" description="Phosphothreonine" evidence="3">
    <location>
        <position position="643"/>
    </location>
</feature>
<feature type="modified residue" description="Phosphothreonine" evidence="3">
    <location>
        <position position="645"/>
    </location>
</feature>
<feature type="modified residue" description="Phosphoserine" evidence="3">
    <location>
        <position position="659"/>
    </location>
</feature>
<feature type="modified residue" description="Phosphoserine" evidence="3">
    <location>
        <position position="662"/>
    </location>
</feature>
<feature type="mutagenesis site" description="Decreases animal survival. No effect on head morphogenesis." evidence="4">
    <location>
        <begin position="632"/>
        <end position="674"/>
    </location>
</feature>
<feature type="mutagenesis site" description="Decreases animal survival. No effect on head morphogenesis." evidence="4">
    <original>SSEDLDTDTEFEPVEDLTLETRSRSSAHTGDQT</original>
    <variation>AAEDLDADAEFEPVEDLALEARARAAAHAGDQA</variation>
    <location>
        <begin position="637"/>
        <end position="669"/>
    </location>
</feature>
<feature type="mutagenesis site" description="Decreases animal survival. No effect on head morphogenesis." evidence="4">
    <original>SSEDLDTDTEFEPVEDLTLETRSRSSAHTGDQT</original>
    <variation>DDEDLDDDDEFEPVEDLDLEDRDRDDAHDGDQD</variation>
    <location>
        <begin position="637"/>
        <end position="669"/>
    </location>
</feature>
<feature type="mutagenesis site" description="Decreases animal survival. No effect on head morphogenesis." evidence="4">
    <original>T</original>
    <variation>A</variation>
    <location>
        <position position="645"/>
    </location>
</feature>
<feature type="mutagenesis site" description="Decreases animal survival. No effect on head morphogenesis." evidence="4">
    <original>T</original>
    <variation>D</variation>
    <location>
        <position position="645"/>
    </location>
</feature>
<feature type="sequence conflict" description="In Ref. 5; AAK93204." evidence="6" ref="5">
    <original>F</original>
    <variation>S</variation>
    <location>
        <position position="711"/>
    </location>
</feature>
<organism>
    <name type="scientific">Drosophila melanogaster</name>
    <name type="common">Fruit fly</name>
    <dbReference type="NCBI Taxonomy" id="7227"/>
    <lineage>
        <taxon>Eukaryota</taxon>
        <taxon>Metazoa</taxon>
        <taxon>Ecdysozoa</taxon>
        <taxon>Arthropoda</taxon>
        <taxon>Hexapoda</taxon>
        <taxon>Insecta</taxon>
        <taxon>Pterygota</taxon>
        <taxon>Neoptera</taxon>
        <taxon>Endopterygota</taxon>
        <taxon>Diptera</taxon>
        <taxon>Brachycera</taxon>
        <taxon>Muscomorpha</taxon>
        <taxon>Ephydroidea</taxon>
        <taxon>Drosophilidae</taxon>
        <taxon>Drosophila</taxon>
        <taxon>Sophophora</taxon>
    </lineage>
</organism>